<name>UX31A_THELO</name>
<feature type="signal peptide">
    <location>
        <begin position="1" status="less than"/>
        <end status="unknown"/>
    </location>
</feature>
<feature type="chain" id="PRO_0000446844" description="U-scutigerotoxin(03)-Tl1a" evidence="2">
    <location>
        <begin status="unknown"/>
        <end position="60"/>
    </location>
</feature>
<feature type="non-terminal residue">
    <location>
        <position position="1"/>
    </location>
</feature>
<dbReference type="SMR" id="P0DPW2"/>
<dbReference type="GO" id="GO:0005576">
    <property type="term" value="C:extracellular region"/>
    <property type="evidence" value="ECO:0007669"/>
    <property type="project" value="UniProtKB-SubCell"/>
</dbReference>
<dbReference type="GO" id="GO:0090729">
    <property type="term" value="F:toxin activity"/>
    <property type="evidence" value="ECO:0007669"/>
    <property type="project" value="UniProtKB-KW"/>
</dbReference>
<proteinExistence type="evidence at transcript level"/>
<accession>P0DPW2</accession>
<reference key="1">
    <citation type="journal article" date="2014" name="Mol. Biol. Evol.">
        <title>Clawing through evolution: toxin diversification and convergence in the ancient lineage Chilopoda (centipedes).</title>
        <authorList>
            <person name="Undheim E.A."/>
            <person name="Jones A."/>
            <person name="Clauser K.R."/>
            <person name="Holland J.W."/>
            <person name="Pineda S.S."/>
            <person name="King G.F."/>
            <person name="Fry B.G."/>
        </authorList>
    </citation>
    <scope>NUCLEOTIDE SEQUENCE [MRNA]</scope>
    <scope>NOMENCLATURE</scope>
    <source>
        <tissue>Venom gland</tissue>
    </source>
</reference>
<comment type="subcellular location">
    <subcellularLocation>
        <location evidence="3">Secreted</location>
    </subcellularLocation>
</comment>
<comment type="tissue specificity">
    <text evidence="3">Expressed by the venom gland.</text>
</comment>
<comment type="PTM">
    <text evidence="2">Contains 3 disulfide bonds.</text>
</comment>
<comment type="similarity">
    <text evidence="2">Belongs to the scutigerotoxin-03 family.</text>
</comment>
<comment type="caution">
    <text evidence="3">All T.longicornis family members described in 'Undeheim et al., 2014' have not been imported into UniProtKB. Please, refer to this paper to access them.</text>
</comment>
<comment type="online information" name="National Center for Biotechnology Information (NCBI)">
    <link uri="https://www.ncbi.nlm.nih.gov/nuccore/GASR01000107"/>
</comment>
<keyword id="KW-1015">Disulfide bond</keyword>
<keyword id="KW-0964">Secreted</keyword>
<keyword id="KW-0732">Signal</keyword>
<keyword id="KW-0800">Toxin</keyword>
<sequence>CLISPTVQNGNVLSFFCFVEENNCPEGFKCCPLTNVTHPPNKAHKGCCAKYRGTVEKPKQ</sequence>
<protein>
    <recommendedName>
        <fullName evidence="1">U-scutigerotoxin(03)-Tl1a</fullName>
        <shortName evidence="1">U-SCUTX(03)-Tl1a</shortName>
    </recommendedName>
</protein>
<organism>
    <name type="scientific">Thereuopoda longicornis</name>
    <name type="common">Long-legged centipede</name>
    <dbReference type="NCBI Taxonomy" id="353555"/>
    <lineage>
        <taxon>Eukaryota</taxon>
        <taxon>Metazoa</taxon>
        <taxon>Ecdysozoa</taxon>
        <taxon>Arthropoda</taxon>
        <taxon>Myriapoda</taxon>
        <taxon>Chilopoda</taxon>
        <taxon>Notostigmophora</taxon>
        <taxon>Scutigeromorpha</taxon>
        <taxon>Scutigeridae</taxon>
        <taxon>Thereuopoda</taxon>
    </lineage>
</organism>
<evidence type="ECO:0000303" key="1">
    <source>
    </source>
</evidence>
<evidence type="ECO:0000305" key="2"/>
<evidence type="ECO:0000305" key="3">
    <source>
    </source>
</evidence>